<name>ENO_SALRD</name>
<comment type="function">
    <text evidence="1">Catalyzes the reversible conversion of 2-phosphoglycerate (2-PG) into phosphoenolpyruvate (PEP). It is essential for the degradation of carbohydrates via glycolysis.</text>
</comment>
<comment type="catalytic activity">
    <reaction evidence="1">
        <text>(2R)-2-phosphoglycerate = phosphoenolpyruvate + H2O</text>
        <dbReference type="Rhea" id="RHEA:10164"/>
        <dbReference type="ChEBI" id="CHEBI:15377"/>
        <dbReference type="ChEBI" id="CHEBI:58289"/>
        <dbReference type="ChEBI" id="CHEBI:58702"/>
        <dbReference type="EC" id="4.2.1.11"/>
    </reaction>
</comment>
<comment type="cofactor">
    <cofactor evidence="1">
        <name>Mg(2+)</name>
        <dbReference type="ChEBI" id="CHEBI:18420"/>
    </cofactor>
    <text evidence="1">Binds a second Mg(2+) ion via substrate during catalysis.</text>
</comment>
<comment type="pathway">
    <text evidence="1">Carbohydrate degradation; glycolysis; pyruvate from D-glyceraldehyde 3-phosphate: step 4/5.</text>
</comment>
<comment type="subcellular location">
    <subcellularLocation>
        <location evidence="1">Cytoplasm</location>
    </subcellularLocation>
    <subcellularLocation>
        <location evidence="1">Secreted</location>
    </subcellularLocation>
    <subcellularLocation>
        <location evidence="1">Cell surface</location>
    </subcellularLocation>
    <text evidence="1">Fractions of enolase are present in both the cytoplasm and on the cell surface.</text>
</comment>
<comment type="similarity">
    <text evidence="1">Belongs to the enolase family.</text>
</comment>
<keyword id="KW-0963">Cytoplasm</keyword>
<keyword id="KW-0324">Glycolysis</keyword>
<keyword id="KW-0456">Lyase</keyword>
<keyword id="KW-0460">Magnesium</keyword>
<keyword id="KW-0479">Metal-binding</keyword>
<keyword id="KW-1185">Reference proteome</keyword>
<keyword id="KW-0964">Secreted</keyword>
<accession>Q2S4F8</accession>
<proteinExistence type="inferred from homology"/>
<sequence length="429" mass="45621">MASIQRVTARQILDSRGTPTVEVDVTTGEGVLGRAAVPSGASTGAYEAVELRDGDADRYHGQGVLRAVGHVNDAVADALHGMSVLEQVAIDDTLRALDGTEDKSNLGANAILGASLAAAKAGAATLGVPLYRHLGRATARTLPVPLMNILNGGEHADNNVDMQEFMIAPAGADSFSEALRTGAEVFHTLASVLQDRDYSTAVGDEGGFAPDLGSNEEAVELILDAIEKAGYTAGSDVFVALDPAAAEMVEDEAYVFWKSDPDTERSSEDMVEYWAEWVDRYPILSIEDAMDEDDWDGWAMLTDAIGDEVQLVGDDLFVTNTKRLTRGVEEGCGNSILIKPNQIGTLTETLNAIETAHTHGFTAIISHRSGETEDTTIADLAVATGTGQIKTGSASRSDRVAKYNQLLRIEEQLGATAHYPRLDAFPLTN</sequence>
<feature type="chain" id="PRO_0000267098" description="Enolase">
    <location>
        <begin position="1"/>
        <end position="429"/>
    </location>
</feature>
<feature type="active site" description="Proton donor" evidence="1">
    <location>
        <position position="205"/>
    </location>
</feature>
<feature type="active site" description="Proton acceptor" evidence="1">
    <location>
        <position position="339"/>
    </location>
</feature>
<feature type="binding site" evidence="1">
    <location>
        <position position="163"/>
    </location>
    <ligand>
        <name>(2R)-2-phosphoglycerate</name>
        <dbReference type="ChEBI" id="CHEBI:58289"/>
    </ligand>
</feature>
<feature type="binding site" evidence="1">
    <location>
        <position position="242"/>
    </location>
    <ligand>
        <name>Mg(2+)</name>
        <dbReference type="ChEBI" id="CHEBI:18420"/>
    </ligand>
</feature>
<feature type="binding site" evidence="1">
    <location>
        <position position="287"/>
    </location>
    <ligand>
        <name>Mg(2+)</name>
        <dbReference type="ChEBI" id="CHEBI:18420"/>
    </ligand>
</feature>
<feature type="binding site" evidence="1">
    <location>
        <position position="314"/>
    </location>
    <ligand>
        <name>Mg(2+)</name>
        <dbReference type="ChEBI" id="CHEBI:18420"/>
    </ligand>
</feature>
<feature type="binding site" evidence="1">
    <location>
        <position position="339"/>
    </location>
    <ligand>
        <name>(2R)-2-phosphoglycerate</name>
        <dbReference type="ChEBI" id="CHEBI:58289"/>
    </ligand>
</feature>
<feature type="binding site" evidence="1">
    <location>
        <position position="368"/>
    </location>
    <ligand>
        <name>(2R)-2-phosphoglycerate</name>
        <dbReference type="ChEBI" id="CHEBI:58289"/>
    </ligand>
</feature>
<feature type="binding site" evidence="1">
    <location>
        <position position="369"/>
    </location>
    <ligand>
        <name>(2R)-2-phosphoglycerate</name>
        <dbReference type="ChEBI" id="CHEBI:58289"/>
    </ligand>
</feature>
<feature type="binding site" evidence="1">
    <location>
        <position position="390"/>
    </location>
    <ligand>
        <name>(2R)-2-phosphoglycerate</name>
        <dbReference type="ChEBI" id="CHEBI:58289"/>
    </ligand>
</feature>
<organism>
    <name type="scientific">Salinibacter ruber (strain DSM 13855 / M31)</name>
    <dbReference type="NCBI Taxonomy" id="309807"/>
    <lineage>
        <taxon>Bacteria</taxon>
        <taxon>Pseudomonadati</taxon>
        <taxon>Rhodothermota</taxon>
        <taxon>Rhodothermia</taxon>
        <taxon>Rhodothermales</taxon>
        <taxon>Salinibacteraceae</taxon>
        <taxon>Salinibacter</taxon>
    </lineage>
</organism>
<dbReference type="EC" id="4.2.1.11" evidence="1"/>
<dbReference type="EMBL" id="CP000159">
    <property type="protein sequence ID" value="ABC45728.1"/>
    <property type="molecule type" value="Genomic_DNA"/>
</dbReference>
<dbReference type="RefSeq" id="WP_011403552.1">
    <property type="nucleotide sequence ID" value="NC_007677.1"/>
</dbReference>
<dbReference type="RefSeq" id="YP_444923.1">
    <property type="nucleotide sequence ID" value="NC_007677.1"/>
</dbReference>
<dbReference type="SMR" id="Q2S4F8"/>
<dbReference type="STRING" id="309807.SRU_0787"/>
<dbReference type="EnsemblBacteria" id="ABC45728">
    <property type="protein sequence ID" value="ABC45728"/>
    <property type="gene ID" value="SRU_0787"/>
</dbReference>
<dbReference type="GeneID" id="83727710"/>
<dbReference type="KEGG" id="sru:SRU_0787"/>
<dbReference type="PATRIC" id="fig|309807.25.peg.810"/>
<dbReference type="eggNOG" id="COG0148">
    <property type="taxonomic scope" value="Bacteria"/>
</dbReference>
<dbReference type="HOGENOM" id="CLU_031223_2_1_10"/>
<dbReference type="OrthoDB" id="9804716at2"/>
<dbReference type="UniPathway" id="UPA00109">
    <property type="reaction ID" value="UER00187"/>
</dbReference>
<dbReference type="Proteomes" id="UP000008674">
    <property type="component" value="Chromosome"/>
</dbReference>
<dbReference type="GO" id="GO:0009986">
    <property type="term" value="C:cell surface"/>
    <property type="evidence" value="ECO:0007669"/>
    <property type="project" value="UniProtKB-SubCell"/>
</dbReference>
<dbReference type="GO" id="GO:0005576">
    <property type="term" value="C:extracellular region"/>
    <property type="evidence" value="ECO:0007669"/>
    <property type="project" value="UniProtKB-SubCell"/>
</dbReference>
<dbReference type="GO" id="GO:0000015">
    <property type="term" value="C:phosphopyruvate hydratase complex"/>
    <property type="evidence" value="ECO:0007669"/>
    <property type="project" value="InterPro"/>
</dbReference>
<dbReference type="GO" id="GO:0000287">
    <property type="term" value="F:magnesium ion binding"/>
    <property type="evidence" value="ECO:0007669"/>
    <property type="project" value="UniProtKB-UniRule"/>
</dbReference>
<dbReference type="GO" id="GO:0004634">
    <property type="term" value="F:phosphopyruvate hydratase activity"/>
    <property type="evidence" value="ECO:0007669"/>
    <property type="project" value="UniProtKB-UniRule"/>
</dbReference>
<dbReference type="GO" id="GO:0006096">
    <property type="term" value="P:glycolytic process"/>
    <property type="evidence" value="ECO:0007669"/>
    <property type="project" value="UniProtKB-UniRule"/>
</dbReference>
<dbReference type="CDD" id="cd03313">
    <property type="entry name" value="enolase"/>
    <property type="match status" value="1"/>
</dbReference>
<dbReference type="FunFam" id="3.20.20.120:FF:000001">
    <property type="entry name" value="Enolase"/>
    <property type="match status" value="1"/>
</dbReference>
<dbReference type="FunFam" id="3.30.390.10:FF:000001">
    <property type="entry name" value="Enolase"/>
    <property type="match status" value="1"/>
</dbReference>
<dbReference type="Gene3D" id="3.20.20.120">
    <property type="entry name" value="Enolase-like C-terminal domain"/>
    <property type="match status" value="1"/>
</dbReference>
<dbReference type="Gene3D" id="3.30.390.10">
    <property type="entry name" value="Enolase-like, N-terminal domain"/>
    <property type="match status" value="1"/>
</dbReference>
<dbReference type="HAMAP" id="MF_00318">
    <property type="entry name" value="Enolase"/>
    <property type="match status" value="1"/>
</dbReference>
<dbReference type="InterPro" id="IPR000941">
    <property type="entry name" value="Enolase"/>
</dbReference>
<dbReference type="InterPro" id="IPR036849">
    <property type="entry name" value="Enolase-like_C_sf"/>
</dbReference>
<dbReference type="InterPro" id="IPR029017">
    <property type="entry name" value="Enolase-like_N"/>
</dbReference>
<dbReference type="InterPro" id="IPR020810">
    <property type="entry name" value="Enolase_C"/>
</dbReference>
<dbReference type="InterPro" id="IPR020809">
    <property type="entry name" value="Enolase_CS"/>
</dbReference>
<dbReference type="InterPro" id="IPR020811">
    <property type="entry name" value="Enolase_N"/>
</dbReference>
<dbReference type="NCBIfam" id="TIGR01060">
    <property type="entry name" value="eno"/>
    <property type="match status" value="1"/>
</dbReference>
<dbReference type="PANTHER" id="PTHR11902">
    <property type="entry name" value="ENOLASE"/>
    <property type="match status" value="1"/>
</dbReference>
<dbReference type="PANTHER" id="PTHR11902:SF1">
    <property type="entry name" value="ENOLASE"/>
    <property type="match status" value="1"/>
</dbReference>
<dbReference type="Pfam" id="PF00113">
    <property type="entry name" value="Enolase_C"/>
    <property type="match status" value="1"/>
</dbReference>
<dbReference type="Pfam" id="PF03952">
    <property type="entry name" value="Enolase_N"/>
    <property type="match status" value="1"/>
</dbReference>
<dbReference type="PIRSF" id="PIRSF001400">
    <property type="entry name" value="Enolase"/>
    <property type="match status" value="1"/>
</dbReference>
<dbReference type="PRINTS" id="PR00148">
    <property type="entry name" value="ENOLASE"/>
</dbReference>
<dbReference type="SFLD" id="SFLDF00002">
    <property type="entry name" value="enolase"/>
    <property type="match status" value="1"/>
</dbReference>
<dbReference type="SFLD" id="SFLDG00178">
    <property type="entry name" value="enolase"/>
    <property type="match status" value="1"/>
</dbReference>
<dbReference type="SMART" id="SM01192">
    <property type="entry name" value="Enolase_C"/>
    <property type="match status" value="1"/>
</dbReference>
<dbReference type="SMART" id="SM01193">
    <property type="entry name" value="Enolase_N"/>
    <property type="match status" value="1"/>
</dbReference>
<dbReference type="SUPFAM" id="SSF51604">
    <property type="entry name" value="Enolase C-terminal domain-like"/>
    <property type="match status" value="1"/>
</dbReference>
<dbReference type="SUPFAM" id="SSF54826">
    <property type="entry name" value="Enolase N-terminal domain-like"/>
    <property type="match status" value="1"/>
</dbReference>
<dbReference type="PROSITE" id="PS00164">
    <property type="entry name" value="ENOLASE"/>
    <property type="match status" value="1"/>
</dbReference>
<protein>
    <recommendedName>
        <fullName evidence="1">Enolase</fullName>
        <ecNumber evidence="1">4.2.1.11</ecNumber>
    </recommendedName>
    <alternativeName>
        <fullName evidence="1">2-phospho-D-glycerate hydro-lyase</fullName>
    </alternativeName>
    <alternativeName>
        <fullName evidence="1">2-phosphoglycerate dehydratase</fullName>
    </alternativeName>
</protein>
<gene>
    <name evidence="1" type="primary">eno</name>
    <name type="ordered locus">SRU_0787</name>
</gene>
<reference key="1">
    <citation type="journal article" date="2005" name="Proc. Natl. Acad. Sci. U.S.A.">
        <title>The genome of Salinibacter ruber: convergence and gene exchange among hyperhalophilic bacteria and archaea.</title>
        <authorList>
            <person name="Mongodin E.F."/>
            <person name="Nelson K.E."/>
            <person name="Daugherty S."/>
            <person name="DeBoy R.T."/>
            <person name="Wister J."/>
            <person name="Khouri H."/>
            <person name="Weidman J."/>
            <person name="Walsh D.A."/>
            <person name="Papke R.T."/>
            <person name="Sanchez Perez G."/>
            <person name="Sharma A.K."/>
            <person name="Nesbo C.L."/>
            <person name="MacLeod D."/>
            <person name="Bapteste E."/>
            <person name="Doolittle W.F."/>
            <person name="Charlebois R.L."/>
            <person name="Legault B."/>
            <person name="Rodriguez-Valera F."/>
        </authorList>
    </citation>
    <scope>NUCLEOTIDE SEQUENCE [LARGE SCALE GENOMIC DNA]</scope>
    <source>
        <strain>DSM 13855 / CECT 5946 / M31</strain>
    </source>
</reference>
<evidence type="ECO:0000255" key="1">
    <source>
        <dbReference type="HAMAP-Rule" id="MF_00318"/>
    </source>
</evidence>